<protein>
    <recommendedName>
        <fullName evidence="1">tRNA pseudouridine synthase B</fullName>
        <ecNumber evidence="1">5.4.99.25</ecNumber>
    </recommendedName>
    <alternativeName>
        <fullName evidence="1">tRNA pseudouridine(55) synthase</fullName>
        <shortName evidence="1">Psi55 synthase</shortName>
    </alternativeName>
    <alternativeName>
        <fullName evidence="1">tRNA pseudouridylate synthase</fullName>
    </alternativeName>
    <alternativeName>
        <fullName evidence="1">tRNA-uridine isomerase</fullName>
    </alternativeName>
</protein>
<gene>
    <name evidence="1" type="primary">truB</name>
    <name type="ordered locus">lwe1343</name>
</gene>
<name>TRUB_LISW6</name>
<evidence type="ECO:0000255" key="1">
    <source>
        <dbReference type="HAMAP-Rule" id="MF_01080"/>
    </source>
</evidence>
<feature type="chain" id="PRO_1000084619" description="tRNA pseudouridine synthase B">
    <location>
        <begin position="1"/>
        <end position="304"/>
    </location>
</feature>
<feature type="active site" description="Nucleophile" evidence="1">
    <location>
        <position position="38"/>
    </location>
</feature>
<proteinExistence type="inferred from homology"/>
<dbReference type="EC" id="5.4.99.25" evidence="1"/>
<dbReference type="EMBL" id="AM263198">
    <property type="protein sequence ID" value="CAK20761.1"/>
    <property type="molecule type" value="Genomic_DNA"/>
</dbReference>
<dbReference type="RefSeq" id="WP_011702145.1">
    <property type="nucleotide sequence ID" value="NC_008555.1"/>
</dbReference>
<dbReference type="SMR" id="A0AIC9"/>
<dbReference type="STRING" id="386043.lwe1343"/>
<dbReference type="GeneID" id="61189220"/>
<dbReference type="KEGG" id="lwe:lwe1343"/>
<dbReference type="eggNOG" id="COG0130">
    <property type="taxonomic scope" value="Bacteria"/>
</dbReference>
<dbReference type="HOGENOM" id="CLU_032087_0_1_9"/>
<dbReference type="OrthoDB" id="9802309at2"/>
<dbReference type="Proteomes" id="UP000000779">
    <property type="component" value="Chromosome"/>
</dbReference>
<dbReference type="GO" id="GO:0003723">
    <property type="term" value="F:RNA binding"/>
    <property type="evidence" value="ECO:0007669"/>
    <property type="project" value="InterPro"/>
</dbReference>
<dbReference type="GO" id="GO:0160148">
    <property type="term" value="F:tRNA pseudouridine(55) synthase activity"/>
    <property type="evidence" value="ECO:0007669"/>
    <property type="project" value="UniProtKB-EC"/>
</dbReference>
<dbReference type="GO" id="GO:1990481">
    <property type="term" value="P:mRNA pseudouridine synthesis"/>
    <property type="evidence" value="ECO:0007669"/>
    <property type="project" value="TreeGrafter"/>
</dbReference>
<dbReference type="GO" id="GO:0031119">
    <property type="term" value="P:tRNA pseudouridine synthesis"/>
    <property type="evidence" value="ECO:0007669"/>
    <property type="project" value="UniProtKB-UniRule"/>
</dbReference>
<dbReference type="CDD" id="cd02573">
    <property type="entry name" value="PseudoU_synth_EcTruB"/>
    <property type="match status" value="1"/>
</dbReference>
<dbReference type="FunFam" id="3.30.2350.10:FF:000011">
    <property type="entry name" value="tRNA pseudouridine synthase B"/>
    <property type="match status" value="1"/>
</dbReference>
<dbReference type="Gene3D" id="3.30.2350.10">
    <property type="entry name" value="Pseudouridine synthase"/>
    <property type="match status" value="1"/>
</dbReference>
<dbReference type="HAMAP" id="MF_01080">
    <property type="entry name" value="TruB_bact"/>
    <property type="match status" value="1"/>
</dbReference>
<dbReference type="InterPro" id="IPR020103">
    <property type="entry name" value="PsdUridine_synth_cat_dom_sf"/>
</dbReference>
<dbReference type="InterPro" id="IPR002501">
    <property type="entry name" value="PsdUridine_synth_N"/>
</dbReference>
<dbReference type="InterPro" id="IPR014780">
    <property type="entry name" value="tRNA_psdUridine_synth_TruB"/>
</dbReference>
<dbReference type="InterPro" id="IPR032819">
    <property type="entry name" value="TruB_C"/>
</dbReference>
<dbReference type="NCBIfam" id="TIGR00431">
    <property type="entry name" value="TruB"/>
    <property type="match status" value="1"/>
</dbReference>
<dbReference type="PANTHER" id="PTHR13767:SF2">
    <property type="entry name" value="PSEUDOURIDYLATE SYNTHASE TRUB1"/>
    <property type="match status" value="1"/>
</dbReference>
<dbReference type="PANTHER" id="PTHR13767">
    <property type="entry name" value="TRNA-PSEUDOURIDINE SYNTHASE"/>
    <property type="match status" value="1"/>
</dbReference>
<dbReference type="Pfam" id="PF16198">
    <property type="entry name" value="TruB_C_2"/>
    <property type="match status" value="1"/>
</dbReference>
<dbReference type="Pfam" id="PF01509">
    <property type="entry name" value="TruB_N"/>
    <property type="match status" value="1"/>
</dbReference>
<dbReference type="SUPFAM" id="SSF55120">
    <property type="entry name" value="Pseudouridine synthase"/>
    <property type="match status" value="1"/>
</dbReference>
<accession>A0AIC9</accession>
<reference key="1">
    <citation type="journal article" date="2006" name="J. Bacteriol.">
        <title>Whole-genome sequence of Listeria welshimeri reveals common steps in genome reduction with Listeria innocua as compared to Listeria monocytogenes.</title>
        <authorList>
            <person name="Hain T."/>
            <person name="Steinweg C."/>
            <person name="Kuenne C.T."/>
            <person name="Billion A."/>
            <person name="Ghai R."/>
            <person name="Chatterjee S.S."/>
            <person name="Domann E."/>
            <person name="Kaerst U."/>
            <person name="Goesmann A."/>
            <person name="Bekel T."/>
            <person name="Bartels D."/>
            <person name="Kaiser O."/>
            <person name="Meyer F."/>
            <person name="Puehler A."/>
            <person name="Weisshaar B."/>
            <person name="Wehland J."/>
            <person name="Liang C."/>
            <person name="Dandekar T."/>
            <person name="Lampidis R."/>
            <person name="Kreft J."/>
            <person name="Goebel W."/>
            <person name="Chakraborty T."/>
        </authorList>
    </citation>
    <scope>NUCLEOTIDE SEQUENCE [LARGE SCALE GENOMIC DNA]</scope>
    <source>
        <strain>ATCC 35897 / DSM 20650 / CCUG 15529 / CIP 8149 / NCTC 11857 / SLCC 5334 / V8</strain>
    </source>
</reference>
<organism>
    <name type="scientific">Listeria welshimeri serovar 6b (strain ATCC 35897 / DSM 20650 / CCUG 15529 / CIP 8149 / NCTC 11857 / SLCC 5334 / V8)</name>
    <dbReference type="NCBI Taxonomy" id="386043"/>
    <lineage>
        <taxon>Bacteria</taxon>
        <taxon>Bacillati</taxon>
        <taxon>Bacillota</taxon>
        <taxon>Bacilli</taxon>
        <taxon>Bacillales</taxon>
        <taxon>Listeriaceae</taxon>
        <taxon>Listeria</taxon>
    </lineage>
</organism>
<sequence>MNGIIPLWKERGMTSHDCVFKLRKILHTKKVGHTGTLDPEVEGVLPICIGRATKLAEYVTDEGKVYVAEITLGKSTTTEDATGEIIATKDLAEISPEALQSVLTKLTGKITQIPPMFSAVKVNGKKLYEYARAGIEVERPSRQVDIYSLTRLDGLASLNESNPTFQLEISCGKGTYIRTLAVMIGELLGYPAHMSKLERTRSGFFKKEDCFTLSEIDEMMQANDLNFLYPLEKGIESMTKLIIDDEIHAKVLNGALLPKALFVSVENESRVALIFEGKLTAIYKPHPEKKDLWKPEKVIELNEA</sequence>
<keyword id="KW-0413">Isomerase</keyword>
<keyword id="KW-0819">tRNA processing</keyword>
<comment type="function">
    <text evidence="1">Responsible for synthesis of pseudouridine from uracil-55 in the psi GC loop of transfer RNAs.</text>
</comment>
<comment type="catalytic activity">
    <reaction evidence="1">
        <text>uridine(55) in tRNA = pseudouridine(55) in tRNA</text>
        <dbReference type="Rhea" id="RHEA:42532"/>
        <dbReference type="Rhea" id="RHEA-COMP:10101"/>
        <dbReference type="Rhea" id="RHEA-COMP:10102"/>
        <dbReference type="ChEBI" id="CHEBI:65314"/>
        <dbReference type="ChEBI" id="CHEBI:65315"/>
        <dbReference type="EC" id="5.4.99.25"/>
    </reaction>
</comment>
<comment type="similarity">
    <text evidence="1">Belongs to the pseudouridine synthase TruB family. Type 1 subfamily.</text>
</comment>